<gene>
    <name evidence="1" type="primary">aroC</name>
    <name type="ordered locus">PputGB1_1408</name>
</gene>
<name>AROC_PSEPG</name>
<proteinExistence type="inferred from homology"/>
<protein>
    <recommendedName>
        <fullName evidence="1">Chorismate synthase</fullName>
        <shortName evidence="1">CS</shortName>
        <ecNumber evidence="1">4.2.3.5</ecNumber>
    </recommendedName>
    <alternativeName>
        <fullName evidence="1">5-enolpyruvylshikimate-3-phosphate phospholyase</fullName>
    </alternativeName>
</protein>
<sequence>MSGNTYGKLFTVTTAGESHGPALVAIVDGCPPGLEISLADLQHDLDRRKPGTSRHTTQRQEADEVEILSGVFEGRTTGCSIGLLIRNTDQKSKDYSAIKDLFRPAHADYTYHHKYGVRDYRGGGRSSARETAMRVAAGAIAKKYLASQGITVRGYMSQLGPIEIPFKTWESVEQNAFFSPDPDKVPELEAYMDQLRRDQDSVGAKITVVAEGVMPGLGEPIFDRLDAELAHALMSINAVKGVEIGAGFASVAQRGTEHRDELTPQGFLSNNAGGILGGISSGQPIVAHLALKPTSSITTPGRSIDIDGNPVDVITKGRHDPCVGIRATPIAEAMMAIALMDHLLRHRAQNADVKVNTPVLGQL</sequence>
<comment type="function">
    <text evidence="1">Catalyzes the anti-1,4-elimination of the C-3 phosphate and the C-6 proR hydrogen from 5-enolpyruvylshikimate-3-phosphate (EPSP) to yield chorismate, which is the branch point compound that serves as the starting substrate for the three terminal pathways of aromatic amino acid biosynthesis. This reaction introduces a second double bond into the aromatic ring system.</text>
</comment>
<comment type="catalytic activity">
    <reaction evidence="1">
        <text>5-O-(1-carboxyvinyl)-3-phosphoshikimate = chorismate + phosphate</text>
        <dbReference type="Rhea" id="RHEA:21020"/>
        <dbReference type="ChEBI" id="CHEBI:29748"/>
        <dbReference type="ChEBI" id="CHEBI:43474"/>
        <dbReference type="ChEBI" id="CHEBI:57701"/>
        <dbReference type="EC" id="4.2.3.5"/>
    </reaction>
</comment>
<comment type="cofactor">
    <cofactor evidence="1">
        <name>FMNH2</name>
        <dbReference type="ChEBI" id="CHEBI:57618"/>
    </cofactor>
    <text evidence="1">Reduced FMN (FMNH(2)).</text>
</comment>
<comment type="pathway">
    <text evidence="1">Metabolic intermediate biosynthesis; chorismate biosynthesis; chorismate from D-erythrose 4-phosphate and phosphoenolpyruvate: step 7/7.</text>
</comment>
<comment type="subunit">
    <text evidence="1">Homotetramer.</text>
</comment>
<comment type="similarity">
    <text evidence="1">Belongs to the chorismate synthase family.</text>
</comment>
<reference key="1">
    <citation type="submission" date="2008-01" db="EMBL/GenBank/DDBJ databases">
        <title>Complete sequence of Pseudomonas putida GB-1.</title>
        <authorList>
            <consortium name="US DOE Joint Genome Institute"/>
            <person name="Copeland A."/>
            <person name="Lucas S."/>
            <person name="Lapidus A."/>
            <person name="Barry K."/>
            <person name="Glavina del Rio T."/>
            <person name="Dalin E."/>
            <person name="Tice H."/>
            <person name="Pitluck S."/>
            <person name="Bruce D."/>
            <person name="Goodwin L."/>
            <person name="Chertkov O."/>
            <person name="Brettin T."/>
            <person name="Detter J.C."/>
            <person name="Han C."/>
            <person name="Kuske C.R."/>
            <person name="Schmutz J."/>
            <person name="Larimer F."/>
            <person name="Land M."/>
            <person name="Hauser L."/>
            <person name="Kyrpides N."/>
            <person name="Kim E."/>
            <person name="McCarthy J.K."/>
            <person name="Richardson P."/>
        </authorList>
    </citation>
    <scope>NUCLEOTIDE SEQUENCE [LARGE SCALE GENOMIC DNA]</scope>
    <source>
        <strain>GB-1</strain>
    </source>
</reference>
<accession>B0KUL0</accession>
<keyword id="KW-0028">Amino-acid biosynthesis</keyword>
<keyword id="KW-0057">Aromatic amino acid biosynthesis</keyword>
<keyword id="KW-0274">FAD</keyword>
<keyword id="KW-0285">Flavoprotein</keyword>
<keyword id="KW-0288">FMN</keyword>
<keyword id="KW-0456">Lyase</keyword>
<keyword id="KW-0521">NADP</keyword>
<evidence type="ECO:0000255" key="1">
    <source>
        <dbReference type="HAMAP-Rule" id="MF_00300"/>
    </source>
</evidence>
<dbReference type="EC" id="4.2.3.5" evidence="1"/>
<dbReference type="EMBL" id="CP000926">
    <property type="protein sequence ID" value="ABY97315.1"/>
    <property type="molecule type" value="Genomic_DNA"/>
</dbReference>
<dbReference type="RefSeq" id="WP_012271084.1">
    <property type="nucleotide sequence ID" value="NC_010322.1"/>
</dbReference>
<dbReference type="SMR" id="B0KUL0"/>
<dbReference type="KEGG" id="ppg:PputGB1_1408"/>
<dbReference type="eggNOG" id="COG0082">
    <property type="taxonomic scope" value="Bacteria"/>
</dbReference>
<dbReference type="HOGENOM" id="CLU_034547_0_2_6"/>
<dbReference type="UniPathway" id="UPA00053">
    <property type="reaction ID" value="UER00090"/>
</dbReference>
<dbReference type="Proteomes" id="UP000002157">
    <property type="component" value="Chromosome"/>
</dbReference>
<dbReference type="GO" id="GO:0005829">
    <property type="term" value="C:cytosol"/>
    <property type="evidence" value="ECO:0007669"/>
    <property type="project" value="TreeGrafter"/>
</dbReference>
<dbReference type="GO" id="GO:0004107">
    <property type="term" value="F:chorismate synthase activity"/>
    <property type="evidence" value="ECO:0007669"/>
    <property type="project" value="UniProtKB-UniRule"/>
</dbReference>
<dbReference type="GO" id="GO:0010181">
    <property type="term" value="F:FMN binding"/>
    <property type="evidence" value="ECO:0007669"/>
    <property type="project" value="TreeGrafter"/>
</dbReference>
<dbReference type="GO" id="GO:0008652">
    <property type="term" value="P:amino acid biosynthetic process"/>
    <property type="evidence" value="ECO:0007669"/>
    <property type="project" value="UniProtKB-KW"/>
</dbReference>
<dbReference type="GO" id="GO:0009073">
    <property type="term" value="P:aromatic amino acid family biosynthetic process"/>
    <property type="evidence" value="ECO:0007669"/>
    <property type="project" value="UniProtKB-KW"/>
</dbReference>
<dbReference type="GO" id="GO:0009423">
    <property type="term" value="P:chorismate biosynthetic process"/>
    <property type="evidence" value="ECO:0007669"/>
    <property type="project" value="UniProtKB-UniRule"/>
</dbReference>
<dbReference type="CDD" id="cd07304">
    <property type="entry name" value="Chorismate_synthase"/>
    <property type="match status" value="1"/>
</dbReference>
<dbReference type="FunFam" id="3.60.150.10:FF:000001">
    <property type="entry name" value="Chorismate synthase"/>
    <property type="match status" value="1"/>
</dbReference>
<dbReference type="Gene3D" id="3.60.150.10">
    <property type="entry name" value="Chorismate synthase AroC"/>
    <property type="match status" value="1"/>
</dbReference>
<dbReference type="HAMAP" id="MF_00300">
    <property type="entry name" value="Chorismate_synth"/>
    <property type="match status" value="1"/>
</dbReference>
<dbReference type="InterPro" id="IPR000453">
    <property type="entry name" value="Chorismate_synth"/>
</dbReference>
<dbReference type="InterPro" id="IPR035904">
    <property type="entry name" value="Chorismate_synth_AroC_sf"/>
</dbReference>
<dbReference type="InterPro" id="IPR020541">
    <property type="entry name" value="Chorismate_synthase_CS"/>
</dbReference>
<dbReference type="NCBIfam" id="TIGR00033">
    <property type="entry name" value="aroC"/>
    <property type="match status" value="1"/>
</dbReference>
<dbReference type="NCBIfam" id="NF003793">
    <property type="entry name" value="PRK05382.1"/>
    <property type="match status" value="1"/>
</dbReference>
<dbReference type="PANTHER" id="PTHR21085">
    <property type="entry name" value="CHORISMATE SYNTHASE"/>
    <property type="match status" value="1"/>
</dbReference>
<dbReference type="PANTHER" id="PTHR21085:SF0">
    <property type="entry name" value="CHORISMATE SYNTHASE"/>
    <property type="match status" value="1"/>
</dbReference>
<dbReference type="Pfam" id="PF01264">
    <property type="entry name" value="Chorismate_synt"/>
    <property type="match status" value="1"/>
</dbReference>
<dbReference type="PIRSF" id="PIRSF001456">
    <property type="entry name" value="Chorismate_synth"/>
    <property type="match status" value="1"/>
</dbReference>
<dbReference type="SUPFAM" id="SSF103263">
    <property type="entry name" value="Chorismate synthase, AroC"/>
    <property type="match status" value="1"/>
</dbReference>
<dbReference type="PROSITE" id="PS00787">
    <property type="entry name" value="CHORISMATE_SYNTHASE_1"/>
    <property type="match status" value="1"/>
</dbReference>
<dbReference type="PROSITE" id="PS00788">
    <property type="entry name" value="CHORISMATE_SYNTHASE_2"/>
    <property type="match status" value="1"/>
</dbReference>
<dbReference type="PROSITE" id="PS00789">
    <property type="entry name" value="CHORISMATE_SYNTHASE_3"/>
    <property type="match status" value="1"/>
</dbReference>
<feature type="chain" id="PRO_1000079004" description="Chorismate synthase">
    <location>
        <begin position="1"/>
        <end position="363"/>
    </location>
</feature>
<feature type="binding site" evidence="1">
    <location>
        <position position="48"/>
    </location>
    <ligand>
        <name>NADP(+)</name>
        <dbReference type="ChEBI" id="CHEBI:58349"/>
    </ligand>
</feature>
<feature type="binding site" evidence="1">
    <location>
        <position position="54"/>
    </location>
    <ligand>
        <name>NADP(+)</name>
        <dbReference type="ChEBI" id="CHEBI:58349"/>
    </ligand>
</feature>
<feature type="binding site" evidence="1">
    <location>
        <begin position="125"/>
        <end position="127"/>
    </location>
    <ligand>
        <name>FMN</name>
        <dbReference type="ChEBI" id="CHEBI:58210"/>
    </ligand>
</feature>
<feature type="binding site" evidence="1">
    <location>
        <begin position="237"/>
        <end position="238"/>
    </location>
    <ligand>
        <name>FMN</name>
        <dbReference type="ChEBI" id="CHEBI:58210"/>
    </ligand>
</feature>
<feature type="binding site" evidence="1">
    <location>
        <position position="277"/>
    </location>
    <ligand>
        <name>FMN</name>
        <dbReference type="ChEBI" id="CHEBI:58210"/>
    </ligand>
</feature>
<feature type="binding site" evidence="1">
    <location>
        <begin position="292"/>
        <end position="296"/>
    </location>
    <ligand>
        <name>FMN</name>
        <dbReference type="ChEBI" id="CHEBI:58210"/>
    </ligand>
</feature>
<feature type="binding site" evidence="1">
    <location>
        <position position="318"/>
    </location>
    <ligand>
        <name>FMN</name>
        <dbReference type="ChEBI" id="CHEBI:58210"/>
    </ligand>
</feature>
<organism>
    <name type="scientific">Pseudomonas putida (strain GB-1)</name>
    <dbReference type="NCBI Taxonomy" id="76869"/>
    <lineage>
        <taxon>Bacteria</taxon>
        <taxon>Pseudomonadati</taxon>
        <taxon>Pseudomonadota</taxon>
        <taxon>Gammaproteobacteria</taxon>
        <taxon>Pseudomonadales</taxon>
        <taxon>Pseudomonadaceae</taxon>
        <taxon>Pseudomonas</taxon>
    </lineage>
</organism>